<evidence type="ECO:0000255" key="1"/>
<evidence type="ECO:0000269" key="2">
    <source>
    </source>
</evidence>
<evidence type="ECO:0000305" key="3"/>
<evidence type="ECO:0000312" key="4">
    <source>
        <dbReference type="RGD" id="620738"/>
    </source>
</evidence>
<accession>Q9JKT7</accession>
<name>T2R13_RAT</name>
<dbReference type="EMBL" id="AF227144">
    <property type="protein sequence ID" value="AAF43917.1"/>
    <property type="molecule type" value="mRNA"/>
</dbReference>
<dbReference type="RefSeq" id="NP_076487.1">
    <property type="nucleotide sequence ID" value="NM_023997.1"/>
</dbReference>
<dbReference type="SMR" id="Q9JKT7"/>
<dbReference type="FunCoup" id="Q9JKT7">
    <property type="interactions" value="89"/>
</dbReference>
<dbReference type="STRING" id="10116.ENSRNOP00000007521"/>
<dbReference type="GlyCosmos" id="Q9JKT7">
    <property type="glycosylation" value="1 site, No reported glycans"/>
</dbReference>
<dbReference type="GlyGen" id="Q9JKT7">
    <property type="glycosylation" value="1 site"/>
</dbReference>
<dbReference type="PhosphoSitePlus" id="Q9JKT7"/>
<dbReference type="PaxDb" id="10116-ENSRNOP00000007521"/>
<dbReference type="GeneID" id="78983"/>
<dbReference type="KEGG" id="rno:78983"/>
<dbReference type="UCSC" id="RGD:620738">
    <property type="organism name" value="rat"/>
</dbReference>
<dbReference type="AGR" id="RGD:620738"/>
<dbReference type="CTD" id="387349"/>
<dbReference type="RGD" id="620738">
    <property type="gene designation" value="Tas2r121"/>
</dbReference>
<dbReference type="eggNOG" id="ENOG502TE6X">
    <property type="taxonomic scope" value="Eukaryota"/>
</dbReference>
<dbReference type="HOGENOM" id="CLU_072337_2_0_1"/>
<dbReference type="InParanoid" id="Q9JKT7"/>
<dbReference type="OrthoDB" id="43573at9989"/>
<dbReference type="PhylomeDB" id="Q9JKT7"/>
<dbReference type="TreeFam" id="TF335891"/>
<dbReference type="Reactome" id="R-RNO-418594">
    <property type="pathway name" value="G alpha (i) signalling events"/>
</dbReference>
<dbReference type="Reactome" id="R-RNO-420499">
    <property type="pathway name" value="Class C/3 (Metabotropic glutamate/pheromone receptors)"/>
</dbReference>
<dbReference type="Reactome" id="R-RNO-9717207">
    <property type="pathway name" value="Sensory perception of sweet, bitter, and umami (glutamate) taste"/>
</dbReference>
<dbReference type="PRO" id="PR:Q9JKT7"/>
<dbReference type="Proteomes" id="UP000002494">
    <property type="component" value="Chromosome 4"/>
</dbReference>
<dbReference type="Bgee" id="ENSRNOG00000005717">
    <property type="expression patterns" value="Expressed in heart"/>
</dbReference>
<dbReference type="GO" id="GO:0016020">
    <property type="term" value="C:membrane"/>
    <property type="evidence" value="ECO:0000318"/>
    <property type="project" value="GO_Central"/>
</dbReference>
<dbReference type="GO" id="GO:0033038">
    <property type="term" value="F:bitter taste receptor activity"/>
    <property type="evidence" value="ECO:0000266"/>
    <property type="project" value="RGD"/>
</dbReference>
<dbReference type="GO" id="GO:0004930">
    <property type="term" value="F:G protein-coupled receptor activity"/>
    <property type="evidence" value="ECO:0007669"/>
    <property type="project" value="UniProtKB-KW"/>
</dbReference>
<dbReference type="GO" id="GO:0008527">
    <property type="term" value="F:taste receptor activity"/>
    <property type="evidence" value="ECO:0000304"/>
    <property type="project" value="UniProtKB"/>
</dbReference>
<dbReference type="GO" id="GO:0001580">
    <property type="term" value="P:detection of chemical stimulus involved in sensory perception of bitter taste"/>
    <property type="evidence" value="ECO:0000266"/>
    <property type="project" value="RGD"/>
</dbReference>
<dbReference type="GO" id="GO:0032467">
    <property type="term" value="P:positive regulation of cytokinesis"/>
    <property type="evidence" value="ECO:0000266"/>
    <property type="project" value="RGD"/>
</dbReference>
<dbReference type="FunFam" id="1.20.1070.10:FF:000042">
    <property type="entry name" value="Taste receptor type 2 member 7"/>
    <property type="match status" value="1"/>
</dbReference>
<dbReference type="Gene3D" id="1.20.1070.10">
    <property type="entry name" value="Rhodopsin 7-helix transmembrane proteins"/>
    <property type="match status" value="1"/>
</dbReference>
<dbReference type="InterPro" id="IPR007960">
    <property type="entry name" value="TAS2R"/>
</dbReference>
<dbReference type="PANTHER" id="PTHR11394">
    <property type="entry name" value="TASTE RECEPTOR TYPE 2"/>
    <property type="match status" value="1"/>
</dbReference>
<dbReference type="PANTHER" id="PTHR11394:SF28">
    <property type="entry name" value="TASTE RECEPTOR TYPE 2 MEMBER 13"/>
    <property type="match status" value="1"/>
</dbReference>
<dbReference type="Pfam" id="PF05296">
    <property type="entry name" value="TAS2R"/>
    <property type="match status" value="1"/>
</dbReference>
<dbReference type="SUPFAM" id="SSF81321">
    <property type="entry name" value="Family A G protein-coupled receptor-like"/>
    <property type="match status" value="1"/>
</dbReference>
<protein>
    <recommendedName>
        <fullName>Taste receptor type 2 member 13</fullName>
        <shortName>T2R13</shortName>
    </recommendedName>
    <alternativeName>
        <fullName evidence="4">Taste receptor type 2 member 121</fullName>
    </alternativeName>
    <alternativeName>
        <fullName>Taste receptor type 2 member 7</fullName>
        <shortName>T2R7</shortName>
    </alternativeName>
</protein>
<comment type="function">
    <text>Receptor that may play a role in the perception of bitterness and is gustducin-linked. May play a role in sensing the chemical composition of the gastrointestinal content. The activity of this receptor may stimulate alpha gustducin, mediate PLC-beta-2 activation and lead to the gating of TRPM5.</text>
</comment>
<comment type="subcellular location">
    <subcellularLocation>
        <location>Membrane</location>
        <topology>Multi-pass membrane protein</topology>
    </subcellularLocation>
</comment>
<comment type="tissue specificity">
    <text evidence="2">Expressed in subsets of taste receptor cells of the tongue and palate epithelium and exclusively in gustducin-positive cells. Expressed in 15% taste bud cells in circumvallate and foliate papillae but only in 2% in fungiform papillae. Expressed in the duodenum, antrum and fundus (part of the stomach).</text>
</comment>
<comment type="miscellaneous">
    <text>Most taste cells may be activated by a limited number of bitter compounds; individual taste cells can discriminate among bitter stimuli.</text>
</comment>
<comment type="similarity">
    <text evidence="3">Belongs to the G-protein coupled receptor T2R family.</text>
</comment>
<comment type="caution">
    <text evidence="3">This protein was previously referred to as T2R7 but is now considered to be the ortholog of human TAS2R13.</text>
</comment>
<feature type="chain" id="PRO_0000082253" description="Taste receptor type 2 member 13">
    <location>
        <begin position="1"/>
        <end position="305"/>
    </location>
</feature>
<feature type="topological domain" description="Extracellular" evidence="1">
    <location>
        <begin position="1"/>
        <end position="7"/>
    </location>
</feature>
<feature type="transmembrane region" description="Helical; Name=1" evidence="1">
    <location>
        <begin position="8"/>
        <end position="28"/>
    </location>
</feature>
<feature type="topological domain" description="Cytoplasmic" evidence="1">
    <location>
        <begin position="29"/>
        <end position="42"/>
    </location>
</feature>
<feature type="transmembrane region" description="Helical; Name=2" evidence="1">
    <location>
        <begin position="43"/>
        <end position="63"/>
    </location>
</feature>
<feature type="topological domain" description="Extracellular" evidence="1">
    <location>
        <begin position="64"/>
        <end position="88"/>
    </location>
</feature>
<feature type="transmembrane region" description="Helical; Name=3" evidence="1">
    <location>
        <begin position="89"/>
        <end position="109"/>
    </location>
</feature>
<feature type="topological domain" description="Cytoplasmic" evidence="1">
    <location>
        <begin position="110"/>
        <end position="128"/>
    </location>
</feature>
<feature type="transmembrane region" description="Helical; Name=4" evidence="1">
    <location>
        <begin position="129"/>
        <end position="149"/>
    </location>
</feature>
<feature type="topological domain" description="Extracellular" evidence="1">
    <location>
        <begin position="150"/>
        <end position="182"/>
    </location>
</feature>
<feature type="transmembrane region" description="Helical; Name=5" evidence="1">
    <location>
        <begin position="183"/>
        <end position="203"/>
    </location>
</feature>
<feature type="topological domain" description="Cytoplasmic" evidence="1">
    <location>
        <begin position="204"/>
        <end position="232"/>
    </location>
</feature>
<feature type="transmembrane region" description="Helical; Name=6" evidence="1">
    <location>
        <begin position="233"/>
        <end position="253"/>
    </location>
</feature>
<feature type="topological domain" description="Extracellular" evidence="1">
    <location>
        <begin position="254"/>
        <end position="262"/>
    </location>
</feature>
<feature type="transmembrane region" description="Helical; Name=7" evidence="1">
    <location>
        <begin position="263"/>
        <end position="283"/>
    </location>
</feature>
<feature type="topological domain" description="Cytoplasmic" evidence="1">
    <location>
        <begin position="284"/>
        <end position="305"/>
    </location>
</feature>
<feature type="glycosylation site" description="N-linked (GlcNAc...) asparagine" evidence="1">
    <location>
        <position position="162"/>
    </location>
</feature>
<keyword id="KW-0297">G-protein coupled receptor</keyword>
<keyword id="KW-0325">Glycoprotein</keyword>
<keyword id="KW-0472">Membrane</keyword>
<keyword id="KW-0675">Receptor</keyword>
<keyword id="KW-1185">Reference proteome</keyword>
<keyword id="KW-0716">Sensory transduction</keyword>
<keyword id="KW-0919">Taste</keyword>
<keyword id="KW-0807">Transducer</keyword>
<keyword id="KW-0812">Transmembrane</keyword>
<keyword id="KW-1133">Transmembrane helix</keyword>
<organism>
    <name type="scientific">Rattus norvegicus</name>
    <name type="common">Rat</name>
    <dbReference type="NCBI Taxonomy" id="10116"/>
    <lineage>
        <taxon>Eukaryota</taxon>
        <taxon>Metazoa</taxon>
        <taxon>Chordata</taxon>
        <taxon>Craniata</taxon>
        <taxon>Vertebrata</taxon>
        <taxon>Euteleostomi</taxon>
        <taxon>Mammalia</taxon>
        <taxon>Eutheria</taxon>
        <taxon>Euarchontoglires</taxon>
        <taxon>Glires</taxon>
        <taxon>Rodentia</taxon>
        <taxon>Myomorpha</taxon>
        <taxon>Muroidea</taxon>
        <taxon>Muridae</taxon>
        <taxon>Murinae</taxon>
        <taxon>Rattus</taxon>
    </lineage>
</organism>
<reference key="1">
    <citation type="journal article" date="2000" name="Cell">
        <title>A novel family of mammalian taste receptors.</title>
        <authorList>
            <person name="Adler E."/>
            <person name="Hoon M.A."/>
            <person name="Mueller K.L."/>
            <person name="Chandrashekar J."/>
            <person name="Ryba N.J.P."/>
            <person name="Zuker C.S."/>
        </authorList>
    </citation>
    <scope>NUCLEOTIDE SEQUENCE [MRNA]</scope>
    <scope>TOPOLOGY</scope>
</reference>
<reference key="2">
    <citation type="journal article" date="2000" name="Cell">
        <title>T2Rs function as bitter taste receptors.</title>
        <authorList>
            <person name="Chandrashekar J."/>
            <person name="Mueller K.L."/>
            <person name="Hoon M.A."/>
            <person name="Adler E."/>
            <person name="Feng L."/>
            <person name="Guo W."/>
            <person name="Zuker C.S."/>
            <person name="Ryba N.J.P."/>
        </authorList>
    </citation>
    <scope>CHARACTERIZATION</scope>
</reference>
<reference key="3">
    <citation type="journal article" date="2002" name="Proc. Natl. Acad. Sci. U.S.A.">
        <title>Expression of bitter taste receptors of the T2R family in the gastrointestinal tract and enteroendocrine STC-1 cells.</title>
        <authorList>
            <person name="Wu S.V."/>
            <person name="Rozengurt N."/>
            <person name="Yang M."/>
            <person name="Young S.H."/>
            <person name="Sinnett-Smith J."/>
            <person name="Rozengurt E."/>
        </authorList>
    </citation>
    <scope>TISSUE SPECIFICITY</scope>
</reference>
<reference key="4">
    <citation type="journal article" date="2002" name="Curr. Opin. Neurobiol.">
        <title>Receptors for bitter and sweet taste.</title>
        <authorList>
            <person name="Montmayeur J.-P."/>
            <person name="Matsunami H."/>
        </authorList>
    </citation>
    <scope>REVIEW</scope>
</reference>
<reference key="5">
    <citation type="journal article" date="2002" name="J. Biol. Chem.">
        <title>Molecular mechanisms of bitter and sweet taste transduction.</title>
        <authorList>
            <person name="Margolskee R.F."/>
        </authorList>
    </citation>
    <scope>REVIEW</scope>
</reference>
<reference key="6">
    <citation type="journal article" date="2003" name="Cell">
        <title>Coding of sweet, bitter, and umami tastes: different receptor cells sharing similar signaling pathways.</title>
        <authorList>
            <person name="Zhang Y."/>
            <person name="Hoon M.A."/>
            <person name="Chandrashekar J."/>
            <person name="Mueller K.L."/>
            <person name="Cook B."/>
            <person name="Wu D."/>
            <person name="Zuker C.S."/>
            <person name="Ryba N.J."/>
        </authorList>
    </citation>
    <scope>REVIEW</scope>
</reference>
<gene>
    <name type="primary">Tas2r13</name>
    <name evidence="4" type="synonym">Tas2r121</name>
    <name type="synonym">Tas2r7</name>
</gene>
<sequence>MGSSLYDILTIVMIAEFIFGNVTNGFIVLTNCIAWLSKRTLSFIGWIQLFLAISRVVLIWEMLLAWLKYMKYSFSYLAGTELRVMMLTWVVSNHFSLWLATILSIFYLLKIASFSRPVFLYLKWRVKKVLLLILLGNLIFLMFNILQINTHIEDWMDQYKRNITWDSRVNEFVGFSNLVLLEMIMFSVTPFTVALVSFILLIFSLWKHLQKMHLSSRGERDPSTKAHVNALRIMVSFLLLYATYFISFFISLIPMAHKKGLDLMFSLTVGLFYPSSHSFILILGHSNLRHSSCLVITYLRCKEKD</sequence>
<proteinExistence type="evidence at protein level"/>